<dbReference type="EMBL" id="BC081945">
    <property type="protein sequence ID" value="AAH81945.1"/>
    <property type="molecule type" value="mRNA"/>
</dbReference>
<dbReference type="RefSeq" id="NP_001011901.1">
    <property type="nucleotide sequence ID" value="NM_001011901.2"/>
</dbReference>
<dbReference type="SMR" id="Q66HA8"/>
<dbReference type="BioGRID" id="252555">
    <property type="interactions" value="3"/>
</dbReference>
<dbReference type="FunCoup" id="Q66HA8">
    <property type="interactions" value="4358"/>
</dbReference>
<dbReference type="STRING" id="10116.ENSRNOP00000001201"/>
<dbReference type="GlyGen" id="Q66HA8">
    <property type="glycosylation" value="1 site, 1 O-linked glycan (1 site)"/>
</dbReference>
<dbReference type="iPTMnet" id="Q66HA8"/>
<dbReference type="PhosphoSitePlus" id="Q66HA8"/>
<dbReference type="SwissPalm" id="Q66HA8"/>
<dbReference type="jPOST" id="Q66HA8"/>
<dbReference type="PaxDb" id="10116-ENSRNOP00000001201"/>
<dbReference type="Ensembl" id="ENSRNOT00000001201.8">
    <property type="protein sequence ID" value="ENSRNOP00000001201.6"/>
    <property type="gene ID" value="ENSRNOG00000000902.8"/>
</dbReference>
<dbReference type="GeneID" id="288444"/>
<dbReference type="KEGG" id="rno:288444"/>
<dbReference type="UCSC" id="RGD:1311609">
    <property type="organism name" value="rat"/>
</dbReference>
<dbReference type="AGR" id="RGD:1311609"/>
<dbReference type="CTD" id="10808"/>
<dbReference type="RGD" id="1311609">
    <property type="gene designation" value="Hsph1"/>
</dbReference>
<dbReference type="eggNOG" id="KOG0103">
    <property type="taxonomic scope" value="Eukaryota"/>
</dbReference>
<dbReference type="GeneTree" id="ENSGT00940000159635"/>
<dbReference type="HOGENOM" id="CLU_005965_5_1_1"/>
<dbReference type="InParanoid" id="Q66HA8"/>
<dbReference type="OMA" id="APVHIEC"/>
<dbReference type="OrthoDB" id="434160at2759"/>
<dbReference type="PhylomeDB" id="Q66HA8"/>
<dbReference type="Reactome" id="R-RNO-3371453">
    <property type="pathway name" value="Regulation of HSF1-mediated heat shock response"/>
</dbReference>
<dbReference type="ChiTaRS" id="Hspa4">
    <property type="organism name" value="rat"/>
</dbReference>
<dbReference type="PRO" id="PR:Q66HA8"/>
<dbReference type="Proteomes" id="UP000002494">
    <property type="component" value="Chromosome 12"/>
</dbReference>
<dbReference type="Bgee" id="ENSRNOG00000000902">
    <property type="expression patterns" value="Expressed in frontal cortex and 20 other cell types or tissues"/>
</dbReference>
<dbReference type="GO" id="GO:0005737">
    <property type="term" value="C:cytoplasm"/>
    <property type="evidence" value="ECO:0000266"/>
    <property type="project" value="RGD"/>
</dbReference>
<dbReference type="GO" id="GO:0005829">
    <property type="term" value="C:cytosol"/>
    <property type="evidence" value="ECO:0000266"/>
    <property type="project" value="RGD"/>
</dbReference>
<dbReference type="GO" id="GO:0005874">
    <property type="term" value="C:microtubule"/>
    <property type="evidence" value="ECO:0000266"/>
    <property type="project" value="RGD"/>
</dbReference>
<dbReference type="GO" id="GO:0005654">
    <property type="term" value="C:nucleoplasm"/>
    <property type="evidence" value="ECO:0007669"/>
    <property type="project" value="Ensembl"/>
</dbReference>
<dbReference type="GO" id="GO:0005634">
    <property type="term" value="C:nucleus"/>
    <property type="evidence" value="ECO:0000318"/>
    <property type="project" value="GO_Central"/>
</dbReference>
<dbReference type="GO" id="GO:0032991">
    <property type="term" value="C:protein-containing complex"/>
    <property type="evidence" value="ECO:0000266"/>
    <property type="project" value="RGD"/>
</dbReference>
<dbReference type="GO" id="GO:0000774">
    <property type="term" value="F:adenyl-nucleotide exchange factor activity"/>
    <property type="evidence" value="ECO:0000250"/>
    <property type="project" value="UniProtKB"/>
</dbReference>
<dbReference type="GO" id="GO:0043014">
    <property type="term" value="F:alpha-tubulin binding"/>
    <property type="evidence" value="ECO:0000266"/>
    <property type="project" value="RGD"/>
</dbReference>
<dbReference type="GO" id="GO:0005524">
    <property type="term" value="F:ATP binding"/>
    <property type="evidence" value="ECO:0007669"/>
    <property type="project" value="UniProtKB-KW"/>
</dbReference>
<dbReference type="GO" id="GO:0140662">
    <property type="term" value="F:ATP-dependent protein folding chaperone"/>
    <property type="evidence" value="ECO:0007669"/>
    <property type="project" value="InterPro"/>
</dbReference>
<dbReference type="GO" id="GO:0051085">
    <property type="term" value="P:chaperone cofactor-dependent protein refolding"/>
    <property type="evidence" value="ECO:0000266"/>
    <property type="project" value="RGD"/>
</dbReference>
<dbReference type="GO" id="GO:0006457">
    <property type="term" value="P:protein folding"/>
    <property type="evidence" value="ECO:0000318"/>
    <property type="project" value="GO_Central"/>
</dbReference>
<dbReference type="CDD" id="cd11739">
    <property type="entry name" value="ASKHA_NBD_HSP70_HSPH1"/>
    <property type="match status" value="1"/>
</dbReference>
<dbReference type="FunFam" id="1.20.1270.10:FF:000002">
    <property type="entry name" value="Heat shock 70 kDa protein 4"/>
    <property type="match status" value="1"/>
</dbReference>
<dbReference type="FunFam" id="3.30.30.30:FF:000002">
    <property type="entry name" value="Heat shock 70 kDa protein 4"/>
    <property type="match status" value="1"/>
</dbReference>
<dbReference type="FunFam" id="3.30.420.40:FF:000171">
    <property type="entry name" value="Heat shock 70 kDa protein 4"/>
    <property type="match status" value="1"/>
</dbReference>
<dbReference type="FunFam" id="3.90.640.10:FF:000004">
    <property type="entry name" value="Heat shock 70 kDa protein 4"/>
    <property type="match status" value="1"/>
</dbReference>
<dbReference type="FunFam" id="3.30.420.40:FF:000243">
    <property type="entry name" value="Heat shock protein 105 kDa"/>
    <property type="match status" value="1"/>
</dbReference>
<dbReference type="FunFam" id="1.20.1270.10:FF:000012">
    <property type="entry name" value="Heat shock protein 105 kDa isoform 1"/>
    <property type="match status" value="1"/>
</dbReference>
<dbReference type="FunFam" id="2.60.34.10:FF:000007">
    <property type="entry name" value="Heat shock protein 105 kDa isoform 1"/>
    <property type="match status" value="1"/>
</dbReference>
<dbReference type="FunFam" id="3.30.420.40:FF:000495">
    <property type="entry name" value="Heat shock protein 4b"/>
    <property type="match status" value="1"/>
</dbReference>
<dbReference type="FunFam" id="3.30.420.40:FF:000767">
    <property type="entry name" value="Heat shock protein 70 (HSP70)-4, putative"/>
    <property type="match status" value="1"/>
</dbReference>
<dbReference type="Gene3D" id="1.20.1270.10">
    <property type="match status" value="2"/>
</dbReference>
<dbReference type="Gene3D" id="3.30.30.30">
    <property type="match status" value="1"/>
</dbReference>
<dbReference type="Gene3D" id="3.30.420.40">
    <property type="match status" value="2"/>
</dbReference>
<dbReference type="Gene3D" id="3.90.640.10">
    <property type="entry name" value="Actin, Chain A, domain 4"/>
    <property type="match status" value="1"/>
</dbReference>
<dbReference type="Gene3D" id="2.60.34.10">
    <property type="entry name" value="Substrate Binding Domain Of DNAk, Chain A, domain 1"/>
    <property type="match status" value="1"/>
</dbReference>
<dbReference type="InterPro" id="IPR043129">
    <property type="entry name" value="ATPase_NBD"/>
</dbReference>
<dbReference type="InterPro" id="IPR018181">
    <property type="entry name" value="Heat_shock_70_CS"/>
</dbReference>
<dbReference type="InterPro" id="IPR029048">
    <property type="entry name" value="HSP70_C_sf"/>
</dbReference>
<dbReference type="InterPro" id="IPR029047">
    <property type="entry name" value="HSP70_peptide-bd_sf"/>
</dbReference>
<dbReference type="InterPro" id="IPR013126">
    <property type="entry name" value="Hsp_70_fam"/>
</dbReference>
<dbReference type="InterPro" id="IPR042053">
    <property type="entry name" value="HSPH1_NBD"/>
</dbReference>
<dbReference type="PANTHER" id="PTHR45639:SF2">
    <property type="entry name" value="HEAT SHOCK PROTEIN 105 KDA"/>
    <property type="match status" value="1"/>
</dbReference>
<dbReference type="PANTHER" id="PTHR45639">
    <property type="entry name" value="HSC70CB, ISOFORM G-RELATED"/>
    <property type="match status" value="1"/>
</dbReference>
<dbReference type="Pfam" id="PF00012">
    <property type="entry name" value="HSP70"/>
    <property type="match status" value="1"/>
</dbReference>
<dbReference type="PRINTS" id="PR00301">
    <property type="entry name" value="HEATSHOCK70"/>
</dbReference>
<dbReference type="SUPFAM" id="SSF53067">
    <property type="entry name" value="Actin-like ATPase domain"/>
    <property type="match status" value="2"/>
</dbReference>
<dbReference type="SUPFAM" id="SSF100934">
    <property type="entry name" value="Heat shock protein 70kD (HSP70), C-terminal subdomain"/>
    <property type="match status" value="2"/>
</dbReference>
<dbReference type="SUPFAM" id="SSF100920">
    <property type="entry name" value="Heat shock protein 70kD (HSP70), peptide-binding domain"/>
    <property type="match status" value="1"/>
</dbReference>
<dbReference type="PROSITE" id="PS01036">
    <property type="entry name" value="HSP70_3"/>
    <property type="match status" value="1"/>
</dbReference>
<name>HS105_RAT</name>
<comment type="function">
    <text evidence="1 2">Acts as a nucleotide-exchange factor (NEF) for chaperone proteins HSPA1A and HSPA1B, promoting the release of ADP from HSPA1A/B thereby triggering substrate release. Prevents the aggregation of denatured proteins in cells under severe stress, on which the ATP levels decrease markedly. Inhibits HSPA8/HSC70 ATPase and chaperone activities.</text>
</comment>
<comment type="subunit">
    <text evidence="1 2">Interacts with HSPA8/HSC70. Interacts with HSPA1A (via NBD) and HSPA1B (via NBD).</text>
</comment>
<comment type="subcellular location">
    <subcellularLocation>
        <location evidence="2">Cytoplasm</location>
    </subcellularLocation>
</comment>
<comment type="PTM">
    <text evidence="1">Phosphorylation on Ser-509 may be important for regulation of the HSPA8/HSC70 chaperone activity.</text>
</comment>
<comment type="similarity">
    <text evidence="4">Belongs to the heat shock protein 70 family.</text>
</comment>
<feature type="initiator methionine" description="Removed" evidence="2">
    <location>
        <position position="1"/>
    </location>
</feature>
<feature type="chain" id="PRO_0000235976" description="Heat shock protein 105 kDa">
    <location>
        <begin position="2"/>
        <end position="858"/>
    </location>
</feature>
<feature type="region of interest" description="Disordered" evidence="3">
    <location>
        <begin position="500"/>
        <end position="585"/>
    </location>
</feature>
<feature type="region of interest" description="Disordered" evidence="3">
    <location>
        <begin position="801"/>
        <end position="858"/>
    </location>
</feature>
<feature type="compositionally biased region" description="Acidic residues" evidence="3">
    <location>
        <begin position="504"/>
        <end position="515"/>
    </location>
</feature>
<feature type="compositionally biased region" description="Polar residues" evidence="3">
    <location>
        <begin position="533"/>
        <end position="555"/>
    </location>
</feature>
<feature type="compositionally biased region" description="Basic and acidic residues" evidence="3">
    <location>
        <begin position="564"/>
        <end position="585"/>
    </location>
</feature>
<feature type="compositionally biased region" description="Basic and acidic residues" evidence="3">
    <location>
        <begin position="806"/>
        <end position="815"/>
    </location>
</feature>
<feature type="modified residue" description="N-acetylserine" evidence="2">
    <location>
        <position position="2"/>
    </location>
</feature>
<feature type="modified residue" description="N6-acetyllysine" evidence="1">
    <location>
        <position position="471"/>
    </location>
</feature>
<feature type="modified residue" description="Phosphoserine" evidence="1">
    <location>
        <position position="509"/>
    </location>
</feature>
<feature type="modified residue" description="Phosphoserine" evidence="1">
    <location>
        <position position="510"/>
    </location>
</feature>
<feature type="modified residue" description="Phosphoserine" evidence="5">
    <location>
        <position position="558"/>
    </location>
</feature>
<feature type="modified residue" description="Phosphothreonine" evidence="2">
    <location>
        <position position="562"/>
    </location>
</feature>
<feature type="modified residue" description="Phosphoserine" evidence="5">
    <location>
        <position position="810"/>
    </location>
</feature>
<feature type="modified residue" description="Phosphothreonine" evidence="2">
    <location>
        <position position="816"/>
    </location>
</feature>
<sequence>MSVVGLDVGSQSCYIAVARAGGIETIANEFSDRCTPSVISFGPKNRTIGVAAKNQQITHANNTVSSFKRFHGRAFNDPFIQKEKENLSYDLVPMKNGGVGIKVMYMDEDHLFSVEQITAMLLTKLKETAENNLKKPVTDCVISVPSFFTDAERRSVLDAAQIVGLNCLRLMNDMTAVALNYGIYKQDLPNADEKPRVVVFVDMGHSSFQVSACAFNKGKLKVLGTAFDPFLGGKNFDEKLVEHFCAEFKTKYKLDAKSKIRALLRLHQECEKLKKLMSSNSTDLPLNIECFMNDKDVSAKMNRSQFEELCAELLQKIEVPLHLLMEQTHLKTEEVSAIEIVGGATRIPAVKERIARFFGKDVSTTLNADEAVARGCALQCAILSPAFKVREFSVTDAVPFPISLVWNHDSEETEGVHEVFSRNHAAPFSKVLTFLRRGPFELEAFYSDPQAVPYPEAKIGRFVVQNVSAQKDGEKSKVKVKVRVNTHGIFTISTASMVEKVPTEEEDGSSVEADMECPNQKPAESSDVDKNIQQDNSEAGTQPQVQTDGQQTSQSPPSPELTSEENKIPDADKANEKKVDQPPEAKKPKIKVVNVELPVEANLVWQLGRDLLNMYIETEGKMIMQDKLEKERNDAKNAVEECVYEFRDKLCGPYEKFICEQEHEKFLRLLTETEDWLYEEGEDQAKQAYIDKLEELMKMGTPVKVRFQEAEERPRVLEELGQRLQHYAKIAADFRGKDEKYNHIDESEMKKVEKSVNEVMEWMNNVMNAQAKRSLHQDPVVRTHEISAKVKELNNVCEPVVTQPKPKIESPKLERTPNGPNMDKKEDLEGKSNLGADAPHQNGECHPNEKGSVSMDLD</sequence>
<organism>
    <name type="scientific">Rattus norvegicus</name>
    <name type="common">Rat</name>
    <dbReference type="NCBI Taxonomy" id="10116"/>
    <lineage>
        <taxon>Eukaryota</taxon>
        <taxon>Metazoa</taxon>
        <taxon>Chordata</taxon>
        <taxon>Craniata</taxon>
        <taxon>Vertebrata</taxon>
        <taxon>Euteleostomi</taxon>
        <taxon>Mammalia</taxon>
        <taxon>Eutheria</taxon>
        <taxon>Euarchontoglires</taxon>
        <taxon>Glires</taxon>
        <taxon>Rodentia</taxon>
        <taxon>Myomorpha</taxon>
        <taxon>Muroidea</taxon>
        <taxon>Muridae</taxon>
        <taxon>Murinae</taxon>
        <taxon>Rattus</taxon>
    </lineage>
</organism>
<gene>
    <name type="primary">Hsph1</name>
    <name type="synonym">Hsp105</name>
    <name type="synonym">Hsp110</name>
</gene>
<reference key="1">
    <citation type="journal article" date="2004" name="Genome Res.">
        <title>The status, quality, and expansion of the NIH full-length cDNA project: the Mammalian Gene Collection (MGC).</title>
        <authorList>
            <consortium name="The MGC Project Team"/>
        </authorList>
    </citation>
    <scope>NUCLEOTIDE SEQUENCE [LARGE SCALE MRNA]</scope>
    <source>
        <tissue>Lung</tissue>
    </source>
</reference>
<reference key="2">
    <citation type="journal article" date="2012" name="Nat. Commun.">
        <title>Quantitative maps of protein phosphorylation sites across 14 different rat organs and tissues.</title>
        <authorList>
            <person name="Lundby A."/>
            <person name="Secher A."/>
            <person name="Lage K."/>
            <person name="Nordsborg N.B."/>
            <person name="Dmytriyev A."/>
            <person name="Lundby C."/>
            <person name="Olsen J.V."/>
        </authorList>
    </citation>
    <scope>PHOSPHORYLATION [LARGE SCALE ANALYSIS] AT SER-558 AND SER-810</scope>
    <scope>IDENTIFICATION BY MASS SPECTROMETRY [LARGE SCALE ANALYSIS]</scope>
</reference>
<evidence type="ECO:0000250" key="1">
    <source>
        <dbReference type="UniProtKB" id="Q61699"/>
    </source>
</evidence>
<evidence type="ECO:0000250" key="2">
    <source>
        <dbReference type="UniProtKB" id="Q92598"/>
    </source>
</evidence>
<evidence type="ECO:0000256" key="3">
    <source>
        <dbReference type="SAM" id="MobiDB-lite"/>
    </source>
</evidence>
<evidence type="ECO:0000305" key="4"/>
<evidence type="ECO:0007744" key="5">
    <source>
    </source>
</evidence>
<accession>Q66HA8</accession>
<protein>
    <recommendedName>
        <fullName>Heat shock protein 105 kDa</fullName>
    </recommendedName>
    <alternativeName>
        <fullName>Heat shock 110 kDa protein</fullName>
    </alternativeName>
</protein>
<keyword id="KW-0007">Acetylation</keyword>
<keyword id="KW-0067">ATP-binding</keyword>
<keyword id="KW-0963">Cytoplasm</keyword>
<keyword id="KW-0547">Nucleotide-binding</keyword>
<keyword id="KW-0597">Phosphoprotein</keyword>
<keyword id="KW-1185">Reference proteome</keyword>
<keyword id="KW-0346">Stress response</keyword>
<proteinExistence type="evidence at protein level"/>